<keyword id="KW-0687">Ribonucleoprotein</keyword>
<keyword id="KW-0689">Ribosomal protein</keyword>
<organism>
    <name type="scientific">Clostridium kluyveri (strain NBRC 12016)</name>
    <dbReference type="NCBI Taxonomy" id="583346"/>
    <lineage>
        <taxon>Bacteria</taxon>
        <taxon>Bacillati</taxon>
        <taxon>Bacillota</taxon>
        <taxon>Clostridia</taxon>
        <taxon>Eubacteriales</taxon>
        <taxon>Clostridiaceae</taxon>
        <taxon>Clostridium</taxon>
    </lineage>
</organism>
<evidence type="ECO:0000255" key="1">
    <source>
        <dbReference type="HAMAP-Rule" id="MF_00291"/>
    </source>
</evidence>
<evidence type="ECO:0000305" key="2"/>
<dbReference type="EMBL" id="AP009049">
    <property type="protein sequence ID" value="BAH06363.1"/>
    <property type="molecule type" value="Genomic_DNA"/>
</dbReference>
<dbReference type="RefSeq" id="WP_012101806.1">
    <property type="nucleotide sequence ID" value="NC_011837.1"/>
</dbReference>
<dbReference type="SMR" id="B9E1I8"/>
<dbReference type="KEGG" id="ckr:CKR_1312"/>
<dbReference type="HOGENOM" id="CLU_040318_1_2_9"/>
<dbReference type="Proteomes" id="UP000007969">
    <property type="component" value="Chromosome"/>
</dbReference>
<dbReference type="GO" id="GO:0022627">
    <property type="term" value="C:cytosolic small ribosomal subunit"/>
    <property type="evidence" value="ECO:0007669"/>
    <property type="project" value="TreeGrafter"/>
</dbReference>
<dbReference type="GO" id="GO:0003735">
    <property type="term" value="F:structural constituent of ribosome"/>
    <property type="evidence" value="ECO:0007669"/>
    <property type="project" value="InterPro"/>
</dbReference>
<dbReference type="GO" id="GO:0006412">
    <property type="term" value="P:translation"/>
    <property type="evidence" value="ECO:0007669"/>
    <property type="project" value="UniProtKB-UniRule"/>
</dbReference>
<dbReference type="CDD" id="cd01425">
    <property type="entry name" value="RPS2"/>
    <property type="match status" value="1"/>
</dbReference>
<dbReference type="FunFam" id="1.10.287.610:FF:000001">
    <property type="entry name" value="30S ribosomal protein S2"/>
    <property type="match status" value="1"/>
</dbReference>
<dbReference type="Gene3D" id="3.40.50.10490">
    <property type="entry name" value="Glucose-6-phosphate isomerase like protein, domain 1"/>
    <property type="match status" value="1"/>
</dbReference>
<dbReference type="Gene3D" id="1.10.287.610">
    <property type="entry name" value="Helix hairpin bin"/>
    <property type="match status" value="1"/>
</dbReference>
<dbReference type="HAMAP" id="MF_00291_B">
    <property type="entry name" value="Ribosomal_uS2_B"/>
    <property type="match status" value="1"/>
</dbReference>
<dbReference type="InterPro" id="IPR001865">
    <property type="entry name" value="Ribosomal_uS2"/>
</dbReference>
<dbReference type="InterPro" id="IPR005706">
    <property type="entry name" value="Ribosomal_uS2_bac/mit/plastid"/>
</dbReference>
<dbReference type="InterPro" id="IPR018130">
    <property type="entry name" value="Ribosomal_uS2_CS"/>
</dbReference>
<dbReference type="InterPro" id="IPR023591">
    <property type="entry name" value="Ribosomal_uS2_flav_dom_sf"/>
</dbReference>
<dbReference type="NCBIfam" id="TIGR01011">
    <property type="entry name" value="rpsB_bact"/>
    <property type="match status" value="1"/>
</dbReference>
<dbReference type="PANTHER" id="PTHR12534">
    <property type="entry name" value="30S RIBOSOMAL PROTEIN S2 PROKARYOTIC AND ORGANELLAR"/>
    <property type="match status" value="1"/>
</dbReference>
<dbReference type="PANTHER" id="PTHR12534:SF0">
    <property type="entry name" value="SMALL RIBOSOMAL SUBUNIT PROTEIN US2M"/>
    <property type="match status" value="1"/>
</dbReference>
<dbReference type="Pfam" id="PF00318">
    <property type="entry name" value="Ribosomal_S2"/>
    <property type="match status" value="1"/>
</dbReference>
<dbReference type="PRINTS" id="PR00395">
    <property type="entry name" value="RIBOSOMALS2"/>
</dbReference>
<dbReference type="SUPFAM" id="SSF52313">
    <property type="entry name" value="Ribosomal protein S2"/>
    <property type="match status" value="1"/>
</dbReference>
<dbReference type="PROSITE" id="PS00962">
    <property type="entry name" value="RIBOSOMAL_S2_1"/>
    <property type="match status" value="1"/>
</dbReference>
<gene>
    <name evidence="1" type="primary">rpsB</name>
    <name type="ordered locus">CKR_1312</name>
</gene>
<reference key="1">
    <citation type="submission" date="2005-09" db="EMBL/GenBank/DDBJ databases">
        <title>Complete genome sequence of Clostridium kluyveri and comparative genomics of Clostridia species.</title>
        <authorList>
            <person name="Inui M."/>
            <person name="Nonaka H."/>
            <person name="Shinoda Y."/>
            <person name="Ikenaga Y."/>
            <person name="Abe M."/>
            <person name="Naito K."/>
            <person name="Vertes A.A."/>
            <person name="Yukawa H."/>
        </authorList>
    </citation>
    <scope>NUCLEOTIDE SEQUENCE [LARGE SCALE GENOMIC DNA]</scope>
    <source>
        <strain>NBRC 12016</strain>
    </source>
</reference>
<name>RS2_CLOK1</name>
<feature type="chain" id="PRO_1000194332" description="Small ribosomal subunit protein uS2">
    <location>
        <begin position="1"/>
        <end position="234"/>
    </location>
</feature>
<proteinExistence type="inferred from homology"/>
<accession>B9E1I8</accession>
<comment type="similarity">
    <text evidence="1">Belongs to the universal ribosomal protein uS2 family.</text>
</comment>
<protein>
    <recommendedName>
        <fullName evidence="1">Small ribosomal subunit protein uS2</fullName>
    </recommendedName>
    <alternativeName>
        <fullName evidence="2">30S ribosomal protein S2</fullName>
    </alternativeName>
</protein>
<sequence length="234" mass="26534">MSIISMKQLLESGVHFGHQTRRWNPKMASYIFTERNGIYIIDLQKTVRKIEEAYEFVKKIASEGKDILFIGTKKQAQEAIKEEAKRSNMHYVNNRWLGGMLTNFLTIRNRIGKLEELEKMEEDGTFEVLSKKEVIKLRNEKQKLERNLGGIKAMNAENVGALFVVDPRKEKNAISEAKILGIPVVAIVDTNCDPDEVDYVIPGNDDAIRAVKLITSKVADAVIEGRQGEQLAEE</sequence>